<dbReference type="EC" id="7.1.1.-"/>
<dbReference type="EMBL" id="U52917">
    <property type="protein sequence ID" value="AAA97947.1"/>
    <property type="molecule type" value="Genomic_DNA"/>
</dbReference>
<dbReference type="EMBL" id="AP008226">
    <property type="protein sequence ID" value="BAD69916.1"/>
    <property type="molecule type" value="Genomic_DNA"/>
</dbReference>
<dbReference type="PIR" id="T11907">
    <property type="entry name" value="T11907"/>
</dbReference>
<dbReference type="RefSeq" id="WP_011227703.1">
    <property type="nucleotide sequence ID" value="NC_006461.1"/>
</dbReference>
<dbReference type="RefSeq" id="YP_143359.1">
    <property type="nucleotide sequence ID" value="NC_006461.1"/>
</dbReference>
<dbReference type="PDB" id="4HE8">
    <property type="method" value="X-ray"/>
    <property type="resolution" value="3.30 A"/>
    <property type="chains" value="D/J=1-176"/>
</dbReference>
<dbReference type="PDB" id="4HEA">
    <property type="method" value="X-ray"/>
    <property type="resolution" value="3.30 A"/>
    <property type="chains" value="J/R=1-176"/>
</dbReference>
<dbReference type="PDB" id="6I0D">
    <property type="method" value="X-ray"/>
    <property type="resolution" value="3.60 A"/>
    <property type="chains" value="J/R=1-176"/>
</dbReference>
<dbReference type="PDB" id="6I1P">
    <property type="method" value="X-ray"/>
    <property type="resolution" value="3.21 A"/>
    <property type="chains" value="J/R=1-176"/>
</dbReference>
<dbReference type="PDB" id="6Q8O">
    <property type="method" value="X-ray"/>
    <property type="resolution" value="3.60 A"/>
    <property type="chains" value="J/R=1-176"/>
</dbReference>
<dbReference type="PDB" id="6Q8W">
    <property type="method" value="X-ray"/>
    <property type="resolution" value="3.40 A"/>
    <property type="chains" value="J/R=1-176"/>
</dbReference>
<dbReference type="PDB" id="6Q8X">
    <property type="method" value="X-ray"/>
    <property type="resolution" value="3.51 A"/>
    <property type="chains" value="J/R=1-176"/>
</dbReference>
<dbReference type="PDB" id="6Y11">
    <property type="method" value="X-ray"/>
    <property type="resolution" value="3.11 A"/>
    <property type="chains" value="J/R=1-176"/>
</dbReference>
<dbReference type="PDB" id="6ZIY">
    <property type="method" value="EM"/>
    <property type="resolution" value="4.25 A"/>
    <property type="chains" value="J=1-176"/>
</dbReference>
<dbReference type="PDB" id="6ZJL">
    <property type="method" value="EM"/>
    <property type="resolution" value="4.30 A"/>
    <property type="chains" value="J=1-176"/>
</dbReference>
<dbReference type="PDB" id="6ZJN">
    <property type="method" value="EM"/>
    <property type="resolution" value="6.10 A"/>
    <property type="chains" value="J=1-176"/>
</dbReference>
<dbReference type="PDB" id="6ZJY">
    <property type="method" value="EM"/>
    <property type="resolution" value="5.50 A"/>
    <property type="chains" value="J=1-176"/>
</dbReference>
<dbReference type="PDBsum" id="4HE8"/>
<dbReference type="PDBsum" id="4HEA"/>
<dbReference type="PDBsum" id="6I0D"/>
<dbReference type="PDBsum" id="6I1P"/>
<dbReference type="PDBsum" id="6Q8O"/>
<dbReference type="PDBsum" id="6Q8W"/>
<dbReference type="PDBsum" id="6Q8X"/>
<dbReference type="PDBsum" id="6Y11"/>
<dbReference type="PDBsum" id="6ZIY"/>
<dbReference type="PDBsum" id="6ZJL"/>
<dbReference type="PDBsum" id="6ZJN"/>
<dbReference type="PDBsum" id="6ZJY"/>
<dbReference type="EMDB" id="EMD-11231"/>
<dbReference type="EMDB" id="EMD-11235"/>
<dbReference type="EMDB" id="EMD-11237"/>
<dbReference type="EMDB" id="EMD-11238"/>
<dbReference type="SMR" id="Q56225"/>
<dbReference type="DIP" id="DIP-59268N"/>
<dbReference type="IntAct" id="Q56225">
    <property type="interactions" value="15"/>
</dbReference>
<dbReference type="TCDB" id="3.D.1.3.1">
    <property type="family name" value="the h+ or na+-translocating nadh dehydrogenase (ndh) family"/>
</dbReference>
<dbReference type="EnsemblBacteria" id="BAD69916">
    <property type="protein sequence ID" value="BAD69916"/>
    <property type="gene ID" value="BAD69916"/>
</dbReference>
<dbReference type="GeneID" id="3169626"/>
<dbReference type="KEGG" id="ttj:TTHA0093"/>
<dbReference type="PATRIC" id="fig|300852.9.peg.91"/>
<dbReference type="eggNOG" id="COG0839">
    <property type="taxonomic scope" value="Bacteria"/>
</dbReference>
<dbReference type="HOGENOM" id="CLU_085957_4_1_0"/>
<dbReference type="Proteomes" id="UP000000532">
    <property type="component" value="Chromosome"/>
</dbReference>
<dbReference type="GO" id="GO:0005886">
    <property type="term" value="C:plasma membrane"/>
    <property type="evidence" value="ECO:0007669"/>
    <property type="project" value="UniProtKB-SubCell"/>
</dbReference>
<dbReference type="GO" id="GO:0008137">
    <property type="term" value="F:NADH dehydrogenase (ubiquinone) activity"/>
    <property type="evidence" value="ECO:0007669"/>
    <property type="project" value="InterPro"/>
</dbReference>
<dbReference type="GO" id="GO:0048038">
    <property type="term" value="F:quinone binding"/>
    <property type="evidence" value="ECO:0007669"/>
    <property type="project" value="UniProtKB-KW"/>
</dbReference>
<dbReference type="Gene3D" id="1.20.120.1200">
    <property type="entry name" value="NADH-ubiquinone/plastoquinone oxidoreductase chain 6, subunit NuoJ"/>
    <property type="match status" value="1"/>
</dbReference>
<dbReference type="InterPro" id="IPR001457">
    <property type="entry name" value="NADH_UbQ/plastoQ_OxRdtase_su6"/>
</dbReference>
<dbReference type="InterPro" id="IPR042106">
    <property type="entry name" value="Nuo/plastoQ_OxRdtase_6_NuoJ"/>
</dbReference>
<dbReference type="PANTHER" id="PTHR33269">
    <property type="entry name" value="NADH-UBIQUINONE OXIDOREDUCTASE CHAIN 6"/>
    <property type="match status" value="1"/>
</dbReference>
<dbReference type="PANTHER" id="PTHR33269:SF17">
    <property type="entry name" value="NADH-UBIQUINONE OXIDOREDUCTASE CHAIN 6"/>
    <property type="match status" value="1"/>
</dbReference>
<dbReference type="Pfam" id="PF00499">
    <property type="entry name" value="Oxidored_q3"/>
    <property type="match status" value="1"/>
</dbReference>
<feature type="chain" id="PRO_0000118369" description="NADH-quinone oxidoreductase subunit 10">
    <location>
        <begin position="1"/>
        <end position="176"/>
    </location>
</feature>
<feature type="transmembrane region" description="Helical" evidence="1">
    <location>
        <begin position="2"/>
        <end position="22"/>
    </location>
</feature>
<feature type="transmembrane region" description="Helical" evidence="1">
    <location>
        <begin position="26"/>
        <end position="46"/>
    </location>
</feature>
<feature type="transmembrane region" description="Helical" evidence="1">
    <location>
        <begin position="56"/>
        <end position="76"/>
    </location>
</feature>
<feature type="transmembrane region" description="Helical" evidence="1">
    <location>
        <begin position="91"/>
        <end position="111"/>
    </location>
</feature>
<feature type="transmembrane region" description="Helical" evidence="1">
    <location>
        <begin position="137"/>
        <end position="157"/>
    </location>
</feature>
<feature type="helix" evidence="4">
    <location>
        <begin position="2"/>
        <end position="21"/>
    </location>
</feature>
<feature type="helix" evidence="4">
    <location>
        <begin position="25"/>
        <end position="45"/>
    </location>
</feature>
<feature type="helix" evidence="4">
    <location>
        <begin position="49"/>
        <end position="57"/>
    </location>
</feature>
<feature type="helix" evidence="4">
    <location>
        <begin position="58"/>
        <end position="62"/>
    </location>
</feature>
<feature type="helix" evidence="4">
    <location>
        <begin position="63"/>
        <end position="73"/>
    </location>
</feature>
<feature type="strand" evidence="3">
    <location>
        <begin position="76"/>
        <end position="79"/>
    </location>
</feature>
<feature type="helix" evidence="4">
    <location>
        <begin position="89"/>
        <end position="108"/>
    </location>
</feature>
<feature type="helix" evidence="4">
    <location>
        <begin position="124"/>
        <end position="131"/>
    </location>
</feature>
<feature type="turn" evidence="4">
    <location>
        <begin position="132"/>
        <end position="135"/>
    </location>
</feature>
<feature type="helix" evidence="4">
    <location>
        <begin position="136"/>
        <end position="157"/>
    </location>
</feature>
<sequence>MSLLEGLALFLLLLSGVLVVTLRNAIHAALALILNFLVLAGVYVALDARFLGFIQVIVYAGAIVVLFLFVIMLLFAAQGEIGFDPLVRSRPLAALLALGVAGILAAGLWGLDLAFTQDLKGGLPQALGPLLYGDWLFVLLAVGFLLMAATVVAVALVEPGKASRAKEAEKREEVAR</sequence>
<keyword id="KW-0002">3D-structure</keyword>
<keyword id="KW-0997">Cell inner membrane</keyword>
<keyword id="KW-1003">Cell membrane</keyword>
<keyword id="KW-0472">Membrane</keyword>
<keyword id="KW-0520">NAD</keyword>
<keyword id="KW-0874">Quinone</keyword>
<keyword id="KW-1185">Reference proteome</keyword>
<keyword id="KW-1278">Translocase</keyword>
<keyword id="KW-0812">Transmembrane</keyword>
<keyword id="KW-1133">Transmembrane helix</keyword>
<reference key="1">
    <citation type="journal article" date="1997" name="J. Biol. Chem.">
        <title>The proton-translocating NADH-quinone oxidoreductase (NDH-1) of thermophilic bacterium Thermus thermophilus HB-8. Complete DNA sequence of the gene cluster and thermostable properties of the expressed NQO2 subunit.</title>
        <authorList>
            <person name="Yano T."/>
            <person name="Chu S.S."/>
            <person name="Sled' V.D."/>
            <person name="Ohnishi T."/>
            <person name="Yagi T."/>
        </authorList>
    </citation>
    <scope>NUCLEOTIDE SEQUENCE [GENOMIC DNA]</scope>
    <source>
        <strain>ATCC 27634 / DSM 579 / HB8</strain>
    </source>
</reference>
<reference key="2">
    <citation type="submission" date="2004-11" db="EMBL/GenBank/DDBJ databases">
        <title>Complete genome sequence of Thermus thermophilus HB8.</title>
        <authorList>
            <person name="Masui R."/>
            <person name="Kurokawa K."/>
            <person name="Nakagawa N."/>
            <person name="Tokunaga F."/>
            <person name="Koyama Y."/>
            <person name="Shibata T."/>
            <person name="Oshima T."/>
            <person name="Yokoyama S."/>
            <person name="Yasunaga T."/>
            <person name="Kuramitsu S."/>
        </authorList>
    </citation>
    <scope>NUCLEOTIDE SEQUENCE [LARGE SCALE GENOMIC DNA]</scope>
    <source>
        <strain>ATCC 27634 / DSM 579 / HB8</strain>
    </source>
</reference>
<organism>
    <name type="scientific">Thermus thermophilus (strain ATCC 27634 / DSM 579 / HB8)</name>
    <dbReference type="NCBI Taxonomy" id="300852"/>
    <lineage>
        <taxon>Bacteria</taxon>
        <taxon>Thermotogati</taxon>
        <taxon>Deinococcota</taxon>
        <taxon>Deinococci</taxon>
        <taxon>Thermales</taxon>
        <taxon>Thermaceae</taxon>
        <taxon>Thermus</taxon>
    </lineage>
</organism>
<name>NQO10_THET8</name>
<proteinExistence type="evidence at protein level"/>
<comment type="function">
    <text>NDH-1 shuttles electrons from NADH, via FMN and iron-sulfur (Fe-S) centers, to quinones in the respiratory chain. The immediate electron acceptor for the enzyme in this species is menaquinone. Couples the redox reaction to proton translocation (for every two electrons transferred, four hydrogen ions are translocated across the cytoplasmic membrane), and thus conserves the redox energy in a proton gradient required for the synthesis of ATP.</text>
</comment>
<comment type="catalytic activity">
    <reaction>
        <text>a quinone + NADH + 5 H(+)(in) = a quinol + NAD(+) + 4 H(+)(out)</text>
        <dbReference type="Rhea" id="RHEA:57888"/>
        <dbReference type="ChEBI" id="CHEBI:15378"/>
        <dbReference type="ChEBI" id="CHEBI:24646"/>
        <dbReference type="ChEBI" id="CHEBI:57540"/>
        <dbReference type="ChEBI" id="CHEBI:57945"/>
        <dbReference type="ChEBI" id="CHEBI:132124"/>
    </reaction>
</comment>
<comment type="subunit">
    <text>NDH-1 is composed of 15 different subunits, Nqo1 to Nqo15. The complex has a L-shaped structure, with the hydrophobic arm (subunits Nqo7, Nqo8 and Nqo10 to Nqo14) embedded in the membrane and the hydrophilic peripheral arm (subunits Nqo1 to Nqo6, Nqo9 and Nqo15) protruding into the bacterial cytoplasm. The hydrophilic domain contains all the redox centers.</text>
</comment>
<comment type="subcellular location">
    <subcellularLocation>
        <location>Cell inner membrane</location>
        <topology>Multi-pass membrane protein</topology>
    </subcellularLocation>
</comment>
<comment type="similarity">
    <text evidence="2">Belongs to the complex I subunit 6 family.</text>
</comment>
<accession>Q56225</accession>
<accession>Q5SM50</accession>
<gene>
    <name type="primary">nqo10</name>
    <name type="ordered locus">TTHA0093</name>
</gene>
<protein>
    <recommendedName>
        <fullName>NADH-quinone oxidoreductase subunit 10</fullName>
        <ecNumber>7.1.1.-</ecNumber>
    </recommendedName>
    <alternativeName>
        <fullName>NADH dehydrogenase I chain 10</fullName>
    </alternativeName>
    <alternativeName>
        <fullName>NDH-1 subunit 10</fullName>
    </alternativeName>
</protein>
<evidence type="ECO:0000255" key="1"/>
<evidence type="ECO:0000305" key="2"/>
<evidence type="ECO:0007829" key="3">
    <source>
        <dbReference type="PDB" id="4HE8"/>
    </source>
</evidence>
<evidence type="ECO:0007829" key="4">
    <source>
        <dbReference type="PDB" id="6Y11"/>
    </source>
</evidence>